<protein>
    <recommendedName>
        <fullName evidence="1">Small ribosomal subunit protein uS13</fullName>
    </recommendedName>
    <alternativeName>
        <fullName evidence="3">30S ribosomal protein S13</fullName>
    </alternativeName>
</protein>
<dbReference type="EMBL" id="AL591983">
    <property type="protein sequence ID" value="CAD00686.1"/>
    <property type="molecule type" value="Genomic_DNA"/>
</dbReference>
<dbReference type="PIR" id="AH1400">
    <property type="entry name" value="AH1400"/>
</dbReference>
<dbReference type="RefSeq" id="NP_466131.1">
    <property type="nucleotide sequence ID" value="NC_003210.1"/>
</dbReference>
<dbReference type="RefSeq" id="WP_003723677.1">
    <property type="nucleotide sequence ID" value="NZ_CP149495.1"/>
</dbReference>
<dbReference type="PDB" id="7NHN">
    <property type="method" value="EM"/>
    <property type="resolution" value="2.90 A"/>
    <property type="chains" value="n=1-121"/>
</dbReference>
<dbReference type="PDBsum" id="7NHN"/>
<dbReference type="EMDB" id="EMD-12334"/>
<dbReference type="SMR" id="P66383"/>
<dbReference type="STRING" id="169963.gene:17595326"/>
<dbReference type="PaxDb" id="169963-lmo2608"/>
<dbReference type="EnsemblBacteria" id="CAD00686">
    <property type="protein sequence ID" value="CAD00686"/>
    <property type="gene ID" value="CAD00686"/>
</dbReference>
<dbReference type="GeneID" id="93240489"/>
<dbReference type="GeneID" id="984551"/>
<dbReference type="KEGG" id="lmo:lmo2608"/>
<dbReference type="PATRIC" id="fig|169963.11.peg.2672"/>
<dbReference type="eggNOG" id="COG0099">
    <property type="taxonomic scope" value="Bacteria"/>
</dbReference>
<dbReference type="HOGENOM" id="CLU_103849_1_1_9"/>
<dbReference type="OrthoDB" id="9803610at2"/>
<dbReference type="PhylomeDB" id="P66383"/>
<dbReference type="BioCyc" id="LMON169963:LMO2608-MONOMER"/>
<dbReference type="Proteomes" id="UP000000817">
    <property type="component" value="Chromosome"/>
</dbReference>
<dbReference type="GO" id="GO:0005829">
    <property type="term" value="C:cytosol"/>
    <property type="evidence" value="ECO:0000318"/>
    <property type="project" value="GO_Central"/>
</dbReference>
<dbReference type="GO" id="GO:0015935">
    <property type="term" value="C:small ribosomal subunit"/>
    <property type="evidence" value="ECO:0000318"/>
    <property type="project" value="GO_Central"/>
</dbReference>
<dbReference type="GO" id="GO:0019843">
    <property type="term" value="F:rRNA binding"/>
    <property type="evidence" value="ECO:0007669"/>
    <property type="project" value="UniProtKB-UniRule"/>
</dbReference>
<dbReference type="GO" id="GO:0003735">
    <property type="term" value="F:structural constituent of ribosome"/>
    <property type="evidence" value="ECO:0007669"/>
    <property type="project" value="InterPro"/>
</dbReference>
<dbReference type="GO" id="GO:0000049">
    <property type="term" value="F:tRNA binding"/>
    <property type="evidence" value="ECO:0007669"/>
    <property type="project" value="UniProtKB-UniRule"/>
</dbReference>
<dbReference type="GO" id="GO:0006412">
    <property type="term" value="P:translation"/>
    <property type="evidence" value="ECO:0007669"/>
    <property type="project" value="UniProtKB-UniRule"/>
</dbReference>
<dbReference type="FunFam" id="1.10.8.50:FF:000001">
    <property type="entry name" value="30S ribosomal protein S13"/>
    <property type="match status" value="1"/>
</dbReference>
<dbReference type="FunFam" id="4.10.910.10:FF:000001">
    <property type="entry name" value="30S ribosomal protein S13"/>
    <property type="match status" value="1"/>
</dbReference>
<dbReference type="Gene3D" id="1.10.8.50">
    <property type="match status" value="1"/>
</dbReference>
<dbReference type="Gene3D" id="4.10.910.10">
    <property type="entry name" value="30s ribosomal protein s13, domain 2"/>
    <property type="match status" value="1"/>
</dbReference>
<dbReference type="HAMAP" id="MF_01315">
    <property type="entry name" value="Ribosomal_uS13"/>
    <property type="match status" value="1"/>
</dbReference>
<dbReference type="InterPro" id="IPR027437">
    <property type="entry name" value="Rbsml_uS13_C"/>
</dbReference>
<dbReference type="InterPro" id="IPR001892">
    <property type="entry name" value="Ribosomal_uS13"/>
</dbReference>
<dbReference type="InterPro" id="IPR010979">
    <property type="entry name" value="Ribosomal_uS13-like_H2TH"/>
</dbReference>
<dbReference type="InterPro" id="IPR019980">
    <property type="entry name" value="Ribosomal_uS13_bac-type"/>
</dbReference>
<dbReference type="InterPro" id="IPR018269">
    <property type="entry name" value="Ribosomal_uS13_CS"/>
</dbReference>
<dbReference type="NCBIfam" id="TIGR03631">
    <property type="entry name" value="uS13_bact"/>
    <property type="match status" value="1"/>
</dbReference>
<dbReference type="PANTHER" id="PTHR10871">
    <property type="entry name" value="30S RIBOSOMAL PROTEIN S13/40S RIBOSOMAL PROTEIN S18"/>
    <property type="match status" value="1"/>
</dbReference>
<dbReference type="PANTHER" id="PTHR10871:SF1">
    <property type="entry name" value="SMALL RIBOSOMAL SUBUNIT PROTEIN US13M"/>
    <property type="match status" value="1"/>
</dbReference>
<dbReference type="Pfam" id="PF00416">
    <property type="entry name" value="Ribosomal_S13"/>
    <property type="match status" value="1"/>
</dbReference>
<dbReference type="PIRSF" id="PIRSF002134">
    <property type="entry name" value="Ribosomal_S13"/>
    <property type="match status" value="1"/>
</dbReference>
<dbReference type="SUPFAM" id="SSF46946">
    <property type="entry name" value="S13-like H2TH domain"/>
    <property type="match status" value="1"/>
</dbReference>
<dbReference type="PROSITE" id="PS00646">
    <property type="entry name" value="RIBOSOMAL_S13_1"/>
    <property type="match status" value="1"/>
</dbReference>
<dbReference type="PROSITE" id="PS50159">
    <property type="entry name" value="RIBOSOMAL_S13_2"/>
    <property type="match status" value="1"/>
</dbReference>
<feature type="chain" id="PRO_0000132105" description="Small ribosomal subunit protein uS13">
    <location>
        <begin position="1"/>
        <end position="121"/>
    </location>
</feature>
<feature type="region of interest" description="Disordered" evidence="2">
    <location>
        <begin position="91"/>
        <end position="121"/>
    </location>
</feature>
<feature type="compositionally biased region" description="Basic residues" evidence="2">
    <location>
        <begin position="106"/>
        <end position="121"/>
    </location>
</feature>
<comment type="function">
    <text evidence="1">Located at the top of the head of the 30S subunit, it contacts several helices of the 16S rRNA. In the 70S ribosome it contacts the 23S rRNA (bridge B1a) and protein L5 of the 50S subunit (bridge B1b), connecting the 2 subunits; these bridges are implicated in subunit movement. Contacts the tRNAs in the A and P-sites.</text>
</comment>
<comment type="subunit">
    <text evidence="1">Part of the 30S ribosomal subunit. Forms a loose heterodimer with protein S19. Forms two bridges to the 50S subunit in the 70S ribosome.</text>
</comment>
<comment type="similarity">
    <text evidence="1">Belongs to the universal ribosomal protein uS13 family.</text>
</comment>
<accession>P66383</accession>
<accession>Q927N1</accession>
<organism>
    <name type="scientific">Listeria monocytogenes serovar 1/2a (strain ATCC BAA-679 / EGD-e)</name>
    <dbReference type="NCBI Taxonomy" id="169963"/>
    <lineage>
        <taxon>Bacteria</taxon>
        <taxon>Bacillati</taxon>
        <taxon>Bacillota</taxon>
        <taxon>Bacilli</taxon>
        <taxon>Bacillales</taxon>
        <taxon>Listeriaceae</taxon>
        <taxon>Listeria</taxon>
    </lineage>
</organism>
<evidence type="ECO:0000255" key="1">
    <source>
        <dbReference type="HAMAP-Rule" id="MF_01315"/>
    </source>
</evidence>
<evidence type="ECO:0000256" key="2">
    <source>
        <dbReference type="SAM" id="MobiDB-lite"/>
    </source>
</evidence>
<evidence type="ECO:0000305" key="3"/>
<name>RS13_LISMO</name>
<keyword id="KW-0002">3D-structure</keyword>
<keyword id="KW-1185">Reference proteome</keyword>
<keyword id="KW-0687">Ribonucleoprotein</keyword>
<keyword id="KW-0689">Ribosomal protein</keyword>
<keyword id="KW-0694">RNA-binding</keyword>
<keyword id="KW-0699">rRNA-binding</keyword>
<keyword id="KW-0820">tRNA-binding</keyword>
<sequence>MARIAGVDVPREKRIVISLTYIYGIGKQTAKEVLAEAGVSEDTRTRDLTEEELGKIREILDRIKVEGDLRREVNLNIKRLIEIGSYRGMRHRRGLPVRGQNTKNNARTRKGPSKTVAGKKK</sequence>
<gene>
    <name evidence="1" type="primary">rpsM</name>
    <name type="ordered locus">lmo2608</name>
</gene>
<reference key="1">
    <citation type="journal article" date="2001" name="Science">
        <title>Comparative genomics of Listeria species.</title>
        <authorList>
            <person name="Glaser P."/>
            <person name="Frangeul L."/>
            <person name="Buchrieser C."/>
            <person name="Rusniok C."/>
            <person name="Amend A."/>
            <person name="Baquero F."/>
            <person name="Berche P."/>
            <person name="Bloecker H."/>
            <person name="Brandt P."/>
            <person name="Chakraborty T."/>
            <person name="Charbit A."/>
            <person name="Chetouani F."/>
            <person name="Couve E."/>
            <person name="de Daruvar A."/>
            <person name="Dehoux P."/>
            <person name="Domann E."/>
            <person name="Dominguez-Bernal G."/>
            <person name="Duchaud E."/>
            <person name="Durant L."/>
            <person name="Dussurget O."/>
            <person name="Entian K.-D."/>
            <person name="Fsihi H."/>
            <person name="Garcia-del Portillo F."/>
            <person name="Garrido P."/>
            <person name="Gautier L."/>
            <person name="Goebel W."/>
            <person name="Gomez-Lopez N."/>
            <person name="Hain T."/>
            <person name="Hauf J."/>
            <person name="Jackson D."/>
            <person name="Jones L.-M."/>
            <person name="Kaerst U."/>
            <person name="Kreft J."/>
            <person name="Kuhn M."/>
            <person name="Kunst F."/>
            <person name="Kurapkat G."/>
            <person name="Madueno E."/>
            <person name="Maitournam A."/>
            <person name="Mata Vicente J."/>
            <person name="Ng E."/>
            <person name="Nedjari H."/>
            <person name="Nordsiek G."/>
            <person name="Novella S."/>
            <person name="de Pablos B."/>
            <person name="Perez-Diaz J.-C."/>
            <person name="Purcell R."/>
            <person name="Remmel B."/>
            <person name="Rose M."/>
            <person name="Schlueter T."/>
            <person name="Simoes N."/>
            <person name="Tierrez A."/>
            <person name="Vazquez-Boland J.-A."/>
            <person name="Voss H."/>
            <person name="Wehland J."/>
            <person name="Cossart P."/>
        </authorList>
    </citation>
    <scope>NUCLEOTIDE SEQUENCE [LARGE SCALE GENOMIC DNA]</scope>
    <source>
        <strain>ATCC BAA-679 / EGD-e</strain>
    </source>
</reference>
<proteinExistence type="evidence at protein level"/>